<name>ENGB_MANSM</name>
<sequence>MTEFKLNYHKTHFMTSAANIHQLPKDEGMEIAFAGRSNAGKSTALNALTNQKNLARTSKTPGRTQLINLFEVEPQYKLVDLPGYGYAAVPEQMKLQWQKSLGEYLQHRECLKGVVILMDIRHPLKDLDQQMIEWAVSSDLPVLLLLTKADKLSQSARSKQVKTVREAILPFQGDVQVEAFSAQNKIGIDKLAAKLDSWFSSLLTE</sequence>
<reference key="1">
    <citation type="journal article" date="2004" name="Nat. Biotechnol.">
        <title>The genome sequence of the capnophilic rumen bacterium Mannheimia succiniciproducens.</title>
        <authorList>
            <person name="Hong S.H."/>
            <person name="Kim J.S."/>
            <person name="Lee S.Y."/>
            <person name="In Y.H."/>
            <person name="Choi S.S."/>
            <person name="Rih J.-K."/>
            <person name="Kim C.H."/>
            <person name="Jeong H."/>
            <person name="Hur C.G."/>
            <person name="Kim J.J."/>
        </authorList>
    </citation>
    <scope>NUCLEOTIDE SEQUENCE [LARGE SCALE GENOMIC DNA]</scope>
    <source>
        <strain>KCTC 0769BP / MBEL55E</strain>
    </source>
</reference>
<proteinExistence type="inferred from homology"/>
<accession>Q65R06</accession>
<organism>
    <name type="scientific">Mannheimia succiniciproducens (strain KCTC 0769BP / MBEL55E)</name>
    <dbReference type="NCBI Taxonomy" id="221988"/>
    <lineage>
        <taxon>Bacteria</taxon>
        <taxon>Pseudomonadati</taxon>
        <taxon>Pseudomonadota</taxon>
        <taxon>Gammaproteobacteria</taxon>
        <taxon>Pasteurellales</taxon>
        <taxon>Pasteurellaceae</taxon>
        <taxon>Basfia</taxon>
    </lineage>
</organism>
<feature type="chain" id="PRO_0000266887" description="Probable GTP-binding protein EngB">
    <location>
        <begin position="1"/>
        <end position="205"/>
    </location>
</feature>
<feature type="domain" description="EngB-type G" evidence="1">
    <location>
        <begin position="27"/>
        <end position="201"/>
    </location>
</feature>
<feature type="binding site" evidence="1">
    <location>
        <begin position="35"/>
        <end position="42"/>
    </location>
    <ligand>
        <name>GTP</name>
        <dbReference type="ChEBI" id="CHEBI:37565"/>
    </ligand>
</feature>
<feature type="binding site" evidence="1">
    <location>
        <position position="42"/>
    </location>
    <ligand>
        <name>Mg(2+)</name>
        <dbReference type="ChEBI" id="CHEBI:18420"/>
    </ligand>
</feature>
<feature type="binding site" evidence="1">
    <location>
        <begin position="62"/>
        <end position="66"/>
    </location>
    <ligand>
        <name>GTP</name>
        <dbReference type="ChEBI" id="CHEBI:37565"/>
    </ligand>
</feature>
<feature type="binding site" evidence="1">
    <location>
        <position position="64"/>
    </location>
    <ligand>
        <name>Mg(2+)</name>
        <dbReference type="ChEBI" id="CHEBI:18420"/>
    </ligand>
</feature>
<feature type="binding site" evidence="1">
    <location>
        <begin position="80"/>
        <end position="83"/>
    </location>
    <ligand>
        <name>GTP</name>
        <dbReference type="ChEBI" id="CHEBI:37565"/>
    </ligand>
</feature>
<feature type="binding site" evidence="1">
    <location>
        <begin position="147"/>
        <end position="150"/>
    </location>
    <ligand>
        <name>GTP</name>
        <dbReference type="ChEBI" id="CHEBI:37565"/>
    </ligand>
</feature>
<feature type="binding site" evidence="1">
    <location>
        <begin position="180"/>
        <end position="182"/>
    </location>
    <ligand>
        <name>GTP</name>
        <dbReference type="ChEBI" id="CHEBI:37565"/>
    </ligand>
</feature>
<gene>
    <name evidence="1" type="primary">engB</name>
    <name type="ordered locus">MS1997</name>
</gene>
<evidence type="ECO:0000255" key="1">
    <source>
        <dbReference type="HAMAP-Rule" id="MF_00321"/>
    </source>
</evidence>
<comment type="function">
    <text evidence="1">Necessary for normal cell division and for the maintenance of normal septation.</text>
</comment>
<comment type="cofactor">
    <cofactor evidence="1">
        <name>Mg(2+)</name>
        <dbReference type="ChEBI" id="CHEBI:18420"/>
    </cofactor>
</comment>
<comment type="similarity">
    <text evidence="1">Belongs to the TRAFAC class TrmE-Era-EngA-EngB-Septin-like GTPase superfamily. EngB GTPase family.</text>
</comment>
<protein>
    <recommendedName>
        <fullName evidence="1">Probable GTP-binding protein EngB</fullName>
    </recommendedName>
</protein>
<dbReference type="EMBL" id="AE016827">
    <property type="protein sequence ID" value="AAU38604.1"/>
    <property type="molecule type" value="Genomic_DNA"/>
</dbReference>
<dbReference type="RefSeq" id="WP_011201155.1">
    <property type="nucleotide sequence ID" value="NC_006300.1"/>
</dbReference>
<dbReference type="SMR" id="Q65R06"/>
<dbReference type="STRING" id="221988.MS1997"/>
<dbReference type="KEGG" id="msu:MS1997"/>
<dbReference type="eggNOG" id="COG0218">
    <property type="taxonomic scope" value="Bacteria"/>
</dbReference>
<dbReference type="HOGENOM" id="CLU_033732_1_0_6"/>
<dbReference type="OrthoDB" id="9804921at2"/>
<dbReference type="Proteomes" id="UP000000607">
    <property type="component" value="Chromosome"/>
</dbReference>
<dbReference type="GO" id="GO:0005829">
    <property type="term" value="C:cytosol"/>
    <property type="evidence" value="ECO:0007669"/>
    <property type="project" value="TreeGrafter"/>
</dbReference>
<dbReference type="GO" id="GO:0005525">
    <property type="term" value="F:GTP binding"/>
    <property type="evidence" value="ECO:0007669"/>
    <property type="project" value="UniProtKB-UniRule"/>
</dbReference>
<dbReference type="GO" id="GO:0046872">
    <property type="term" value="F:metal ion binding"/>
    <property type="evidence" value="ECO:0007669"/>
    <property type="project" value="UniProtKB-KW"/>
</dbReference>
<dbReference type="GO" id="GO:0000917">
    <property type="term" value="P:division septum assembly"/>
    <property type="evidence" value="ECO:0007669"/>
    <property type="project" value="UniProtKB-KW"/>
</dbReference>
<dbReference type="CDD" id="cd01876">
    <property type="entry name" value="YihA_EngB"/>
    <property type="match status" value="1"/>
</dbReference>
<dbReference type="FunFam" id="3.40.50.300:FF:000098">
    <property type="entry name" value="Probable GTP-binding protein EngB"/>
    <property type="match status" value="1"/>
</dbReference>
<dbReference type="Gene3D" id="3.40.50.300">
    <property type="entry name" value="P-loop containing nucleotide triphosphate hydrolases"/>
    <property type="match status" value="1"/>
</dbReference>
<dbReference type="HAMAP" id="MF_00321">
    <property type="entry name" value="GTPase_EngB"/>
    <property type="match status" value="1"/>
</dbReference>
<dbReference type="InterPro" id="IPR030393">
    <property type="entry name" value="G_ENGB_dom"/>
</dbReference>
<dbReference type="InterPro" id="IPR006073">
    <property type="entry name" value="GTP-bd"/>
</dbReference>
<dbReference type="InterPro" id="IPR019987">
    <property type="entry name" value="GTP-bd_ribosome_bio_YsxC"/>
</dbReference>
<dbReference type="InterPro" id="IPR027417">
    <property type="entry name" value="P-loop_NTPase"/>
</dbReference>
<dbReference type="NCBIfam" id="TIGR03598">
    <property type="entry name" value="GTPase_YsxC"/>
    <property type="match status" value="1"/>
</dbReference>
<dbReference type="PANTHER" id="PTHR11649:SF13">
    <property type="entry name" value="ENGB-TYPE G DOMAIN-CONTAINING PROTEIN"/>
    <property type="match status" value="1"/>
</dbReference>
<dbReference type="PANTHER" id="PTHR11649">
    <property type="entry name" value="MSS1/TRME-RELATED GTP-BINDING PROTEIN"/>
    <property type="match status" value="1"/>
</dbReference>
<dbReference type="Pfam" id="PF01926">
    <property type="entry name" value="MMR_HSR1"/>
    <property type="match status" value="1"/>
</dbReference>
<dbReference type="SUPFAM" id="SSF52540">
    <property type="entry name" value="P-loop containing nucleoside triphosphate hydrolases"/>
    <property type="match status" value="1"/>
</dbReference>
<dbReference type="PROSITE" id="PS51706">
    <property type="entry name" value="G_ENGB"/>
    <property type="match status" value="1"/>
</dbReference>
<keyword id="KW-0131">Cell cycle</keyword>
<keyword id="KW-0132">Cell division</keyword>
<keyword id="KW-0342">GTP-binding</keyword>
<keyword id="KW-0460">Magnesium</keyword>
<keyword id="KW-0479">Metal-binding</keyword>
<keyword id="KW-0547">Nucleotide-binding</keyword>
<keyword id="KW-0717">Septation</keyword>